<name>EFTS_STRGC</name>
<sequence length="347" mass="37307">MAEITAKLVKELREKSGAGVMDAKKALVETDGDIEKAIELLREKGMAKAAKKADRVAAEGLTGVYVNGNVAAVVEVNAETDFVAKNAQFVDLVNATAKVIAEGKPANNEEALALTMPSGETLEAAYVSATATIGEKISFRRFALIEKTDAQHFGAYQHNGGRIGVISVIEGGDEALAKQISMHIAAMKPTVLSYKELDEQFVKDELAQLNHAIDQDNESRAMVGKPALPHLKYGSKAQLTDAVVAQAEEDIKAELAAEGKPEKIWDKIIPGKMDRFMLDNTKVDQAYTLLAQVYIMDDSKTVEAYLESVNASVVEFARFEVGEGIEKAANDFESEVAATMAAALGQN</sequence>
<accession>A8AZP0</accession>
<keyword id="KW-0963">Cytoplasm</keyword>
<keyword id="KW-0251">Elongation factor</keyword>
<keyword id="KW-0648">Protein biosynthesis</keyword>
<keyword id="KW-1185">Reference proteome</keyword>
<proteinExistence type="inferred from homology"/>
<dbReference type="EMBL" id="CP000725">
    <property type="protein sequence ID" value="ABV10083.1"/>
    <property type="molecule type" value="Genomic_DNA"/>
</dbReference>
<dbReference type="RefSeq" id="WP_012130978.1">
    <property type="nucleotide sequence ID" value="NC_009785.1"/>
</dbReference>
<dbReference type="SMR" id="A8AZP0"/>
<dbReference type="STRING" id="467705.SGO_2000"/>
<dbReference type="KEGG" id="sgo:SGO_2000"/>
<dbReference type="eggNOG" id="COG0264">
    <property type="taxonomic scope" value="Bacteria"/>
</dbReference>
<dbReference type="HOGENOM" id="CLU_047155_0_1_9"/>
<dbReference type="Proteomes" id="UP000001131">
    <property type="component" value="Chromosome"/>
</dbReference>
<dbReference type="GO" id="GO:0005737">
    <property type="term" value="C:cytoplasm"/>
    <property type="evidence" value="ECO:0007669"/>
    <property type="project" value="UniProtKB-SubCell"/>
</dbReference>
<dbReference type="GO" id="GO:0003746">
    <property type="term" value="F:translation elongation factor activity"/>
    <property type="evidence" value="ECO:0007669"/>
    <property type="project" value="UniProtKB-UniRule"/>
</dbReference>
<dbReference type="CDD" id="cd14275">
    <property type="entry name" value="UBA_EF-Ts"/>
    <property type="match status" value="1"/>
</dbReference>
<dbReference type="FunFam" id="1.10.286.20:FF:000004">
    <property type="entry name" value="Elongation factor Ts"/>
    <property type="match status" value="1"/>
</dbReference>
<dbReference type="FunFam" id="1.10.8.10:FF:000001">
    <property type="entry name" value="Elongation factor Ts"/>
    <property type="match status" value="1"/>
</dbReference>
<dbReference type="FunFam" id="3.30.479.20:FF:000009">
    <property type="entry name" value="Elongation factor Ts"/>
    <property type="match status" value="1"/>
</dbReference>
<dbReference type="FunFam" id="3.30.479.20:FF:000013">
    <property type="entry name" value="Elongation factor Ts"/>
    <property type="match status" value="1"/>
</dbReference>
<dbReference type="Gene3D" id="1.10.286.20">
    <property type="match status" value="1"/>
</dbReference>
<dbReference type="Gene3D" id="1.10.8.10">
    <property type="entry name" value="DNA helicase RuvA subunit, C-terminal domain"/>
    <property type="match status" value="1"/>
</dbReference>
<dbReference type="Gene3D" id="3.30.479.20">
    <property type="entry name" value="Elongation factor Ts, dimerisation domain"/>
    <property type="match status" value="3"/>
</dbReference>
<dbReference type="HAMAP" id="MF_00050">
    <property type="entry name" value="EF_Ts"/>
    <property type="match status" value="1"/>
</dbReference>
<dbReference type="InterPro" id="IPR036402">
    <property type="entry name" value="EF-Ts_dimer_sf"/>
</dbReference>
<dbReference type="InterPro" id="IPR001816">
    <property type="entry name" value="Transl_elong_EFTs/EF1B"/>
</dbReference>
<dbReference type="InterPro" id="IPR014039">
    <property type="entry name" value="Transl_elong_EFTs/EF1B_dimer"/>
</dbReference>
<dbReference type="InterPro" id="IPR018101">
    <property type="entry name" value="Transl_elong_Ts_CS"/>
</dbReference>
<dbReference type="InterPro" id="IPR009060">
    <property type="entry name" value="UBA-like_sf"/>
</dbReference>
<dbReference type="NCBIfam" id="TIGR00116">
    <property type="entry name" value="tsf"/>
    <property type="match status" value="1"/>
</dbReference>
<dbReference type="PANTHER" id="PTHR11741">
    <property type="entry name" value="ELONGATION FACTOR TS"/>
    <property type="match status" value="1"/>
</dbReference>
<dbReference type="PANTHER" id="PTHR11741:SF0">
    <property type="entry name" value="ELONGATION FACTOR TS, MITOCHONDRIAL"/>
    <property type="match status" value="1"/>
</dbReference>
<dbReference type="Pfam" id="PF00889">
    <property type="entry name" value="EF_TS"/>
    <property type="match status" value="1"/>
</dbReference>
<dbReference type="SUPFAM" id="SSF54713">
    <property type="entry name" value="Elongation factor Ts (EF-Ts), dimerisation domain"/>
    <property type="match status" value="2"/>
</dbReference>
<dbReference type="SUPFAM" id="SSF46934">
    <property type="entry name" value="UBA-like"/>
    <property type="match status" value="1"/>
</dbReference>
<dbReference type="PROSITE" id="PS01126">
    <property type="entry name" value="EF_TS_1"/>
    <property type="match status" value="1"/>
</dbReference>
<dbReference type="PROSITE" id="PS01127">
    <property type="entry name" value="EF_TS_2"/>
    <property type="match status" value="1"/>
</dbReference>
<evidence type="ECO:0000255" key="1">
    <source>
        <dbReference type="HAMAP-Rule" id="MF_00050"/>
    </source>
</evidence>
<reference key="1">
    <citation type="journal article" date="2007" name="J. Bacteriol.">
        <title>Genome-wide transcriptional changes in Streptococcus gordonii in response to competence signaling peptide.</title>
        <authorList>
            <person name="Vickerman M.M."/>
            <person name="Iobst S."/>
            <person name="Jesionowski A.M."/>
            <person name="Gill S.R."/>
        </authorList>
    </citation>
    <scope>NUCLEOTIDE SEQUENCE [LARGE SCALE GENOMIC DNA]</scope>
    <source>
        <strain>Challis / ATCC 35105 / BCRC 15272 / CH1 / DL1 / V288</strain>
    </source>
</reference>
<gene>
    <name evidence="1" type="primary">tsf</name>
    <name type="ordered locus">SGO_2000</name>
</gene>
<feature type="chain" id="PRO_0000323466" description="Elongation factor Ts">
    <location>
        <begin position="1"/>
        <end position="347"/>
    </location>
</feature>
<feature type="region of interest" description="Involved in Mg(2+) ion dislocation from EF-Tu" evidence="1">
    <location>
        <begin position="80"/>
        <end position="83"/>
    </location>
</feature>
<protein>
    <recommendedName>
        <fullName evidence="1">Elongation factor Ts</fullName>
        <shortName evidence="1">EF-Ts</shortName>
    </recommendedName>
</protein>
<organism>
    <name type="scientific">Streptococcus gordonii (strain Challis / ATCC 35105 / BCRC 15272 / CH1 / DL1 / V288)</name>
    <dbReference type="NCBI Taxonomy" id="467705"/>
    <lineage>
        <taxon>Bacteria</taxon>
        <taxon>Bacillati</taxon>
        <taxon>Bacillota</taxon>
        <taxon>Bacilli</taxon>
        <taxon>Lactobacillales</taxon>
        <taxon>Streptococcaceae</taxon>
        <taxon>Streptococcus</taxon>
    </lineage>
</organism>
<comment type="function">
    <text evidence="1">Associates with the EF-Tu.GDP complex and induces the exchange of GDP to GTP. It remains bound to the aminoacyl-tRNA.EF-Tu.GTP complex up to the GTP hydrolysis stage on the ribosome.</text>
</comment>
<comment type="subcellular location">
    <subcellularLocation>
        <location evidence="1">Cytoplasm</location>
    </subcellularLocation>
</comment>
<comment type="similarity">
    <text evidence="1">Belongs to the EF-Ts family.</text>
</comment>